<accession>O64226</accession>
<keyword id="KW-1185">Reference proteome</keyword>
<protein>
    <recommendedName>
        <fullName>Gene 32 protein</fullName>
    </recommendedName>
    <alternativeName>
        <fullName>Gp32</fullName>
    </alternativeName>
</protein>
<gene>
    <name type="primary">32</name>
</gene>
<reference key="1">
    <citation type="journal article" date="1998" name="J. Mol. Biol.">
        <title>Genome structure of mycobacteriophage D29: implications for phage evolution.</title>
        <authorList>
            <person name="Ford M.E."/>
            <person name="Sarkis G.J."/>
            <person name="Belanger A.E."/>
            <person name="Hendrix R.W."/>
            <person name="Hatfull G.F."/>
        </authorList>
    </citation>
    <scope>NUCLEOTIDE SEQUENCE [LARGE SCALE GENOMIC DNA]</scope>
</reference>
<sequence length="223" mass="21822">MAGISSGLEGIRAISWNTVPILKVSLGNDQVWPAFDPVLTPVTAVGAYTYNIPAQAEFIDVILLGAGGGGQGMGSATAWGQGGFGGSWVTATLRRGVDIPWAVTQITGVIGAGGTAGPGYIFGQTGAGGKGGDTTATFSGGGTLIAAGGAGGNSRKLDFGGKSPNPADMVYRDRTYDGGARQLTPSGIGYAPGGGGAAATVPVGITGLAGGPGARGQAWFLAY</sequence>
<name>VG32_BPMD2</name>
<organism>
    <name type="scientific">Mycobacterium phage D29</name>
    <name type="common">Mycobacteriophage D29</name>
    <dbReference type="NCBI Taxonomy" id="28369"/>
    <lineage>
        <taxon>Viruses</taxon>
        <taxon>Duplodnaviria</taxon>
        <taxon>Heunggongvirae</taxon>
        <taxon>Uroviricota</taxon>
        <taxon>Caudoviricetes</taxon>
        <taxon>Fromanvirus</taxon>
    </lineage>
</organism>
<proteinExistence type="predicted"/>
<organismHost>
    <name type="scientific">Mycobacterium</name>
    <dbReference type="NCBI Taxonomy" id="1763"/>
</organismHost>
<feature type="chain" id="PRO_0000164752" description="Gene 32 protein">
    <location>
        <begin position="1"/>
        <end position="223"/>
    </location>
</feature>
<dbReference type="EMBL" id="AF022214">
    <property type="protein sequence ID" value="AAC18473.1"/>
    <property type="molecule type" value="Genomic_DNA"/>
</dbReference>
<dbReference type="PIR" id="F72803">
    <property type="entry name" value="F72803"/>
</dbReference>
<dbReference type="RefSeq" id="NP_046848.1">
    <property type="nucleotide sequence ID" value="NC_001900.1"/>
</dbReference>
<dbReference type="SMR" id="O64226"/>
<dbReference type="GeneID" id="1261559"/>
<dbReference type="KEGG" id="vg:1261559"/>
<dbReference type="OrthoDB" id="17155at10239"/>
<dbReference type="Proteomes" id="UP000002131">
    <property type="component" value="Segment"/>
</dbReference>